<gene>
    <name evidence="1" type="primary">gltX</name>
    <name type="ordered locus">Cag_0392</name>
</gene>
<protein>
    <recommendedName>
        <fullName evidence="1">Glutamate--tRNA ligase</fullName>
        <ecNumber evidence="1">6.1.1.17</ecNumber>
    </recommendedName>
    <alternativeName>
        <fullName evidence="1">Glutamyl-tRNA synthetase</fullName>
        <shortName evidence="1">GluRS</shortName>
    </alternativeName>
</protein>
<feature type="chain" id="PRO_0000237353" description="Glutamate--tRNA ligase">
    <location>
        <begin position="1"/>
        <end position="502"/>
    </location>
</feature>
<feature type="short sequence motif" description="'HIGH' region" evidence="1">
    <location>
        <begin position="12"/>
        <end position="22"/>
    </location>
</feature>
<feature type="short sequence motif" description="'KMSKS' region" evidence="1">
    <location>
        <begin position="259"/>
        <end position="263"/>
    </location>
</feature>
<feature type="binding site" evidence="1">
    <location>
        <position position="262"/>
    </location>
    <ligand>
        <name>ATP</name>
        <dbReference type="ChEBI" id="CHEBI:30616"/>
    </ligand>
</feature>
<sequence length="502" mass="57687">MVGQRVRTRFAPSPTGYLHVGGLRTALYNFLFAKKMKGDFIIRIEDTDQSRKVEGAQQNLIKTLEWAGIIADESPQHGGSCGPYIQSERLDIYAKHCKQLLEDHHAYYCFATPEELEENRQLQLKQGLQPKYNRKWLPEEMGGTMPESLIRQKLEAGEPYVIRMKVPDYISVWFEDIIRGPIEFDSATIDDQVLMKSDGFPTYHFASVIDDHLMEISHIIRGEEWLSSMPKHLLLYEFFGWEAPKVAHLPLLLNPDRSKLSKRQGDVAVEDYIRKGYSSEAIVNFVALLGWNEGEGCEQEVYSLQELTDKFSLERVGKAGSIFTLDKLKWLEKQYIKNRSVEKLLSVVKPLLLEELEKKPSIMAREQITSDSYLSSVIELMRERVGFEHEFVTFSTYFYFEPESYDEESVKKRWQPNTNELLADFIPQLEALSDFTAENIEAALKAFVEPKGMKNAVLIHPLRIVTSGVGFGPSLYHMLEVLGKETVLRRIRKGLECITMPA</sequence>
<comment type="function">
    <text evidence="1">Catalyzes the attachment of glutamate to tRNA(Glu) in a two-step reaction: glutamate is first activated by ATP to form Glu-AMP and then transferred to the acceptor end of tRNA(Glu).</text>
</comment>
<comment type="catalytic activity">
    <reaction evidence="1">
        <text>tRNA(Glu) + L-glutamate + ATP = L-glutamyl-tRNA(Glu) + AMP + diphosphate</text>
        <dbReference type="Rhea" id="RHEA:23540"/>
        <dbReference type="Rhea" id="RHEA-COMP:9663"/>
        <dbReference type="Rhea" id="RHEA-COMP:9680"/>
        <dbReference type="ChEBI" id="CHEBI:29985"/>
        <dbReference type="ChEBI" id="CHEBI:30616"/>
        <dbReference type="ChEBI" id="CHEBI:33019"/>
        <dbReference type="ChEBI" id="CHEBI:78442"/>
        <dbReference type="ChEBI" id="CHEBI:78520"/>
        <dbReference type="ChEBI" id="CHEBI:456215"/>
        <dbReference type="EC" id="6.1.1.17"/>
    </reaction>
</comment>
<comment type="subunit">
    <text evidence="1">Monomer.</text>
</comment>
<comment type="subcellular location">
    <subcellularLocation>
        <location evidence="1">Cytoplasm</location>
    </subcellularLocation>
</comment>
<comment type="similarity">
    <text evidence="1">Belongs to the class-I aminoacyl-tRNA synthetase family. Glutamate--tRNA ligase type 1 subfamily.</text>
</comment>
<dbReference type="EC" id="6.1.1.17" evidence="1"/>
<dbReference type="EMBL" id="CP000108">
    <property type="protein sequence ID" value="ABB27665.1"/>
    <property type="molecule type" value="Genomic_DNA"/>
</dbReference>
<dbReference type="SMR" id="Q3ATL0"/>
<dbReference type="STRING" id="340177.Cag_0392"/>
<dbReference type="KEGG" id="cch:Cag_0392"/>
<dbReference type="eggNOG" id="COG0008">
    <property type="taxonomic scope" value="Bacteria"/>
</dbReference>
<dbReference type="HOGENOM" id="CLU_015768_6_3_10"/>
<dbReference type="OrthoDB" id="9807503at2"/>
<dbReference type="GO" id="GO:0005737">
    <property type="term" value="C:cytoplasm"/>
    <property type="evidence" value="ECO:0007669"/>
    <property type="project" value="UniProtKB-SubCell"/>
</dbReference>
<dbReference type="GO" id="GO:0005524">
    <property type="term" value="F:ATP binding"/>
    <property type="evidence" value="ECO:0007669"/>
    <property type="project" value="UniProtKB-UniRule"/>
</dbReference>
<dbReference type="GO" id="GO:0004818">
    <property type="term" value="F:glutamate-tRNA ligase activity"/>
    <property type="evidence" value="ECO:0007669"/>
    <property type="project" value="UniProtKB-UniRule"/>
</dbReference>
<dbReference type="GO" id="GO:0000049">
    <property type="term" value="F:tRNA binding"/>
    <property type="evidence" value="ECO:0007669"/>
    <property type="project" value="InterPro"/>
</dbReference>
<dbReference type="GO" id="GO:0008270">
    <property type="term" value="F:zinc ion binding"/>
    <property type="evidence" value="ECO:0007669"/>
    <property type="project" value="InterPro"/>
</dbReference>
<dbReference type="GO" id="GO:0006424">
    <property type="term" value="P:glutamyl-tRNA aminoacylation"/>
    <property type="evidence" value="ECO:0007669"/>
    <property type="project" value="UniProtKB-UniRule"/>
</dbReference>
<dbReference type="CDD" id="cd00808">
    <property type="entry name" value="GluRS_core"/>
    <property type="match status" value="1"/>
</dbReference>
<dbReference type="FunFam" id="3.40.50.620:FF:000045">
    <property type="entry name" value="Glutamate--tRNA ligase, mitochondrial"/>
    <property type="match status" value="1"/>
</dbReference>
<dbReference type="Gene3D" id="1.10.10.350">
    <property type="match status" value="1"/>
</dbReference>
<dbReference type="Gene3D" id="3.40.50.620">
    <property type="entry name" value="HUPs"/>
    <property type="match status" value="1"/>
</dbReference>
<dbReference type="HAMAP" id="MF_00022">
    <property type="entry name" value="Glu_tRNA_synth_type1"/>
    <property type="match status" value="1"/>
</dbReference>
<dbReference type="InterPro" id="IPR045462">
    <property type="entry name" value="aa-tRNA-synth_I_cd-bd"/>
</dbReference>
<dbReference type="InterPro" id="IPR020751">
    <property type="entry name" value="aa-tRNA-synth_I_codon-bd_sub2"/>
</dbReference>
<dbReference type="InterPro" id="IPR001412">
    <property type="entry name" value="aa-tRNA-synth_I_CS"/>
</dbReference>
<dbReference type="InterPro" id="IPR008925">
    <property type="entry name" value="aa_tRNA-synth_I_cd-bd_sf"/>
</dbReference>
<dbReference type="InterPro" id="IPR004527">
    <property type="entry name" value="Glu-tRNA-ligase_bac/mito"/>
</dbReference>
<dbReference type="InterPro" id="IPR000924">
    <property type="entry name" value="Glu/Gln-tRNA-synth"/>
</dbReference>
<dbReference type="InterPro" id="IPR020058">
    <property type="entry name" value="Glu/Gln-tRNA-synth_Ib_cat-dom"/>
</dbReference>
<dbReference type="InterPro" id="IPR049940">
    <property type="entry name" value="GluQ/Sye"/>
</dbReference>
<dbReference type="InterPro" id="IPR033910">
    <property type="entry name" value="GluRS_core"/>
</dbReference>
<dbReference type="InterPro" id="IPR014729">
    <property type="entry name" value="Rossmann-like_a/b/a_fold"/>
</dbReference>
<dbReference type="NCBIfam" id="TIGR00464">
    <property type="entry name" value="gltX_bact"/>
    <property type="match status" value="1"/>
</dbReference>
<dbReference type="PANTHER" id="PTHR43311">
    <property type="entry name" value="GLUTAMATE--TRNA LIGASE"/>
    <property type="match status" value="1"/>
</dbReference>
<dbReference type="PANTHER" id="PTHR43311:SF2">
    <property type="entry name" value="GLUTAMATE--TRNA LIGASE, MITOCHONDRIAL-RELATED"/>
    <property type="match status" value="1"/>
</dbReference>
<dbReference type="Pfam" id="PF19269">
    <property type="entry name" value="Anticodon_2"/>
    <property type="match status" value="1"/>
</dbReference>
<dbReference type="Pfam" id="PF00749">
    <property type="entry name" value="tRNA-synt_1c"/>
    <property type="match status" value="1"/>
</dbReference>
<dbReference type="PRINTS" id="PR00987">
    <property type="entry name" value="TRNASYNTHGLU"/>
</dbReference>
<dbReference type="SUPFAM" id="SSF48163">
    <property type="entry name" value="An anticodon-binding domain of class I aminoacyl-tRNA synthetases"/>
    <property type="match status" value="1"/>
</dbReference>
<dbReference type="SUPFAM" id="SSF52374">
    <property type="entry name" value="Nucleotidylyl transferase"/>
    <property type="match status" value="1"/>
</dbReference>
<dbReference type="PROSITE" id="PS00178">
    <property type="entry name" value="AA_TRNA_LIGASE_I"/>
    <property type="match status" value="1"/>
</dbReference>
<keyword id="KW-0030">Aminoacyl-tRNA synthetase</keyword>
<keyword id="KW-0067">ATP-binding</keyword>
<keyword id="KW-0963">Cytoplasm</keyword>
<keyword id="KW-0436">Ligase</keyword>
<keyword id="KW-0547">Nucleotide-binding</keyword>
<keyword id="KW-0648">Protein biosynthesis</keyword>
<accession>Q3ATL0</accession>
<reference key="1">
    <citation type="submission" date="2005-08" db="EMBL/GenBank/DDBJ databases">
        <title>Complete sequence of Chlorobium chlorochromatii CaD3.</title>
        <authorList>
            <consortium name="US DOE Joint Genome Institute"/>
            <person name="Copeland A."/>
            <person name="Lucas S."/>
            <person name="Lapidus A."/>
            <person name="Barry K."/>
            <person name="Detter J.C."/>
            <person name="Glavina T."/>
            <person name="Hammon N."/>
            <person name="Israni S."/>
            <person name="Pitluck S."/>
            <person name="Bryant D."/>
            <person name="Schmutz J."/>
            <person name="Larimer F."/>
            <person name="Land M."/>
            <person name="Kyrpides N."/>
            <person name="Ivanova N."/>
            <person name="Richardson P."/>
        </authorList>
    </citation>
    <scope>NUCLEOTIDE SEQUENCE [LARGE SCALE GENOMIC DNA]</scope>
    <source>
        <strain>CaD3</strain>
    </source>
</reference>
<organism>
    <name type="scientific">Chlorobium chlorochromatii (strain CaD3)</name>
    <dbReference type="NCBI Taxonomy" id="340177"/>
    <lineage>
        <taxon>Bacteria</taxon>
        <taxon>Pseudomonadati</taxon>
        <taxon>Chlorobiota</taxon>
        <taxon>Chlorobiia</taxon>
        <taxon>Chlorobiales</taxon>
        <taxon>Chlorobiaceae</taxon>
        <taxon>Chlorobium/Pelodictyon group</taxon>
        <taxon>Chlorobium</taxon>
    </lineage>
</organism>
<evidence type="ECO:0000255" key="1">
    <source>
        <dbReference type="HAMAP-Rule" id="MF_00022"/>
    </source>
</evidence>
<proteinExistence type="inferred from homology"/>
<name>SYE_CHLCH</name>